<name>NUSG_SHIFL</name>
<evidence type="ECO:0000250" key="1"/>
<evidence type="ECO:0000255" key="2">
    <source>
        <dbReference type="HAMAP-Rule" id="MF_00948"/>
    </source>
</evidence>
<accession>P0AFG2</accession>
<accession>P16921</accession>
<organism>
    <name type="scientific">Shigella flexneri</name>
    <dbReference type="NCBI Taxonomy" id="623"/>
    <lineage>
        <taxon>Bacteria</taxon>
        <taxon>Pseudomonadati</taxon>
        <taxon>Pseudomonadota</taxon>
        <taxon>Gammaproteobacteria</taxon>
        <taxon>Enterobacterales</taxon>
        <taxon>Enterobacteriaceae</taxon>
        <taxon>Shigella</taxon>
    </lineage>
</organism>
<gene>
    <name evidence="2" type="primary">nusG</name>
    <name type="ordered locus">SF4055</name>
    <name type="ordered locus">S3680</name>
</gene>
<protein>
    <recommendedName>
        <fullName evidence="2">Transcription termination/antitermination protein NusG</fullName>
    </recommendedName>
</protein>
<sequence>MSEAPKKRWYVVQAFSGFEGRVATSLREHIKLHNMEDLFGEVMVPTEEVVEIRGGQRRKSERKFFPGYVLVQMVMNDASWHLVRSVPRVMGFIGGTSDRPAPISDKEVDAIMNRLQQVGDKPRPKTLFEPGEMVRVNDGPFADFNGVVEEVDYEKSRLKVSVSIFGRATPVELDFSQVEKA</sequence>
<reference key="1">
    <citation type="journal article" date="2002" name="Nucleic Acids Res.">
        <title>Genome sequence of Shigella flexneri 2a: insights into pathogenicity through comparison with genomes of Escherichia coli K12 and O157.</title>
        <authorList>
            <person name="Jin Q."/>
            <person name="Yuan Z."/>
            <person name="Xu J."/>
            <person name="Wang Y."/>
            <person name="Shen Y."/>
            <person name="Lu W."/>
            <person name="Wang J."/>
            <person name="Liu H."/>
            <person name="Yang J."/>
            <person name="Yang F."/>
            <person name="Zhang X."/>
            <person name="Zhang J."/>
            <person name="Yang G."/>
            <person name="Wu H."/>
            <person name="Qu D."/>
            <person name="Dong J."/>
            <person name="Sun L."/>
            <person name="Xue Y."/>
            <person name="Zhao A."/>
            <person name="Gao Y."/>
            <person name="Zhu J."/>
            <person name="Kan B."/>
            <person name="Ding K."/>
            <person name="Chen S."/>
            <person name="Cheng H."/>
            <person name="Yao Z."/>
            <person name="He B."/>
            <person name="Chen R."/>
            <person name="Ma D."/>
            <person name="Qiang B."/>
            <person name="Wen Y."/>
            <person name="Hou Y."/>
            <person name="Yu J."/>
        </authorList>
    </citation>
    <scope>NUCLEOTIDE SEQUENCE [LARGE SCALE GENOMIC DNA]</scope>
    <source>
        <strain>301 / Serotype 2a</strain>
    </source>
</reference>
<reference key="2">
    <citation type="journal article" date="2003" name="Infect. Immun.">
        <title>Complete genome sequence and comparative genomics of Shigella flexneri serotype 2a strain 2457T.</title>
        <authorList>
            <person name="Wei J."/>
            <person name="Goldberg M.B."/>
            <person name="Burland V."/>
            <person name="Venkatesan M.M."/>
            <person name="Deng W."/>
            <person name="Fournier G."/>
            <person name="Mayhew G.F."/>
            <person name="Plunkett G. III"/>
            <person name="Rose D.J."/>
            <person name="Darling A."/>
            <person name="Mau B."/>
            <person name="Perna N.T."/>
            <person name="Payne S.M."/>
            <person name="Runyen-Janecky L.J."/>
            <person name="Zhou S."/>
            <person name="Schwartz D.C."/>
            <person name="Blattner F.R."/>
        </authorList>
    </citation>
    <scope>NUCLEOTIDE SEQUENCE [LARGE SCALE GENOMIC DNA]</scope>
    <source>
        <strain>ATCC 700930 / 2457T / Serotype 2a</strain>
    </source>
</reference>
<proteinExistence type="inferred from homology"/>
<dbReference type="EMBL" id="AE005674">
    <property type="protein sequence ID" value="AAN45484.1"/>
    <property type="molecule type" value="Genomic_DNA"/>
</dbReference>
<dbReference type="EMBL" id="AE014073">
    <property type="protein sequence ID" value="AAP18717.1"/>
    <property type="molecule type" value="Genomic_DNA"/>
</dbReference>
<dbReference type="RefSeq" id="NP_709777.1">
    <property type="nucleotide sequence ID" value="NC_004337.2"/>
</dbReference>
<dbReference type="RefSeq" id="WP_001287516.1">
    <property type="nucleotide sequence ID" value="NZ_WPGW01000040.1"/>
</dbReference>
<dbReference type="SMR" id="P0AFG2"/>
<dbReference type="STRING" id="198214.SF4055"/>
<dbReference type="PaxDb" id="198214-SF4055"/>
<dbReference type="GeneID" id="1025388"/>
<dbReference type="GeneID" id="93777912"/>
<dbReference type="KEGG" id="sfl:SF4055"/>
<dbReference type="KEGG" id="sfx:S3680"/>
<dbReference type="PATRIC" id="fig|198214.7.peg.4778"/>
<dbReference type="HOGENOM" id="CLU_067287_1_0_6"/>
<dbReference type="Proteomes" id="UP000001006">
    <property type="component" value="Chromosome"/>
</dbReference>
<dbReference type="Proteomes" id="UP000002673">
    <property type="component" value="Chromosome"/>
</dbReference>
<dbReference type="GO" id="GO:0005829">
    <property type="term" value="C:cytosol"/>
    <property type="evidence" value="ECO:0007669"/>
    <property type="project" value="TreeGrafter"/>
</dbReference>
<dbReference type="GO" id="GO:0006353">
    <property type="term" value="P:DNA-templated transcription termination"/>
    <property type="evidence" value="ECO:0007669"/>
    <property type="project" value="UniProtKB-UniRule"/>
</dbReference>
<dbReference type="GO" id="GO:0032784">
    <property type="term" value="P:regulation of DNA-templated transcription elongation"/>
    <property type="evidence" value="ECO:0007669"/>
    <property type="project" value="InterPro"/>
</dbReference>
<dbReference type="GO" id="GO:0031564">
    <property type="term" value="P:transcription antitermination"/>
    <property type="evidence" value="ECO:0007669"/>
    <property type="project" value="UniProtKB-UniRule"/>
</dbReference>
<dbReference type="GO" id="GO:0140673">
    <property type="term" value="P:transcription elongation-coupled chromatin remodeling"/>
    <property type="evidence" value="ECO:0007669"/>
    <property type="project" value="InterPro"/>
</dbReference>
<dbReference type="CDD" id="cd06091">
    <property type="entry name" value="KOW_NusG"/>
    <property type="match status" value="1"/>
</dbReference>
<dbReference type="CDD" id="cd09891">
    <property type="entry name" value="NGN_Bact_1"/>
    <property type="match status" value="1"/>
</dbReference>
<dbReference type="FunFam" id="2.30.30.30:FF:000002">
    <property type="entry name" value="Transcription termination/antitermination factor NusG"/>
    <property type="match status" value="1"/>
</dbReference>
<dbReference type="FunFam" id="3.30.70.940:FF:000001">
    <property type="entry name" value="Transcription termination/antitermination protein NusG"/>
    <property type="match status" value="1"/>
</dbReference>
<dbReference type="Gene3D" id="2.30.30.30">
    <property type="match status" value="1"/>
</dbReference>
<dbReference type="Gene3D" id="3.30.70.940">
    <property type="entry name" value="NusG, N-terminal domain"/>
    <property type="match status" value="1"/>
</dbReference>
<dbReference type="HAMAP" id="MF_00948">
    <property type="entry name" value="NusG"/>
    <property type="match status" value="1"/>
</dbReference>
<dbReference type="InterPro" id="IPR005824">
    <property type="entry name" value="KOW"/>
</dbReference>
<dbReference type="InterPro" id="IPR047050">
    <property type="entry name" value="NGN"/>
</dbReference>
<dbReference type="InterPro" id="IPR006645">
    <property type="entry name" value="NGN-like_dom"/>
</dbReference>
<dbReference type="InterPro" id="IPR036735">
    <property type="entry name" value="NGN_dom_sf"/>
</dbReference>
<dbReference type="InterPro" id="IPR043425">
    <property type="entry name" value="NusG-like"/>
</dbReference>
<dbReference type="InterPro" id="IPR014722">
    <property type="entry name" value="Rib_uL2_dom2"/>
</dbReference>
<dbReference type="InterPro" id="IPR001062">
    <property type="entry name" value="Transcrpt_antiterm_NusG"/>
</dbReference>
<dbReference type="InterPro" id="IPR015869">
    <property type="entry name" value="Transcrpt_antiterm_NusG_bac_CS"/>
</dbReference>
<dbReference type="InterPro" id="IPR008991">
    <property type="entry name" value="Translation_prot_SH3-like_sf"/>
</dbReference>
<dbReference type="NCBIfam" id="TIGR00922">
    <property type="entry name" value="nusG"/>
    <property type="match status" value="1"/>
</dbReference>
<dbReference type="PANTHER" id="PTHR30265">
    <property type="entry name" value="RHO-INTERACTING TRANSCRIPTION TERMINATION FACTOR NUSG"/>
    <property type="match status" value="1"/>
</dbReference>
<dbReference type="PANTHER" id="PTHR30265:SF2">
    <property type="entry name" value="TRANSCRIPTION TERMINATION_ANTITERMINATION PROTEIN NUSG"/>
    <property type="match status" value="1"/>
</dbReference>
<dbReference type="Pfam" id="PF00467">
    <property type="entry name" value="KOW"/>
    <property type="match status" value="1"/>
</dbReference>
<dbReference type="Pfam" id="PF02357">
    <property type="entry name" value="NusG"/>
    <property type="match status" value="1"/>
</dbReference>
<dbReference type="PRINTS" id="PR00338">
    <property type="entry name" value="NUSGTNSCPFCT"/>
</dbReference>
<dbReference type="SMART" id="SM00739">
    <property type="entry name" value="KOW"/>
    <property type="match status" value="1"/>
</dbReference>
<dbReference type="SMART" id="SM00738">
    <property type="entry name" value="NGN"/>
    <property type="match status" value="1"/>
</dbReference>
<dbReference type="SUPFAM" id="SSF82679">
    <property type="entry name" value="N-utilization substance G protein NusG, N-terminal domain"/>
    <property type="match status" value="1"/>
</dbReference>
<dbReference type="SUPFAM" id="SSF50104">
    <property type="entry name" value="Translation proteins SH3-like domain"/>
    <property type="match status" value="1"/>
</dbReference>
<dbReference type="PROSITE" id="PS01014">
    <property type="entry name" value="NUSG"/>
    <property type="match status" value="1"/>
</dbReference>
<keyword id="KW-1185">Reference proteome</keyword>
<keyword id="KW-0804">Transcription</keyword>
<keyword id="KW-0889">Transcription antitermination</keyword>
<keyword id="KW-0805">Transcription regulation</keyword>
<keyword id="KW-0806">Transcription termination</keyword>
<feature type="initiator methionine" description="Removed" evidence="1">
    <location>
        <position position="1"/>
    </location>
</feature>
<feature type="chain" id="PRO_0000113945" description="Transcription termination/antitermination protein NusG">
    <location>
        <begin position="2"/>
        <end position="181"/>
    </location>
</feature>
<feature type="domain" description="KOW" evidence="2">
    <location>
        <begin position="130"/>
        <end position="161"/>
    </location>
</feature>
<comment type="function">
    <text evidence="2">Participates in transcription elongation, termination and antitermination. In the absence of Rho, increases the rate of transcription elongation by the RNA polymerase (RNAP), probably by partially suppressing pausing. In the presence of Rho, modulates most Rho-dependent termination events by interacting with the RNAP to render the complex more susceptible to the termination activity of Rho. May be required to overcome a kinetic limitation of Rho to function at certain terminators. Also involved in ribosomal RNA transcriptional antitermination.</text>
</comment>
<comment type="subunit">
    <text evidence="2">Monomer. Interacts with the transcription termination factor Rho and with RNA polymerase.</text>
</comment>
<comment type="similarity">
    <text evidence="2">Belongs to the NusG family.</text>
</comment>